<keyword id="KW-0256">Endoplasmic reticulum</keyword>
<keyword id="KW-0472">Membrane</keyword>
<keyword id="KW-1185">Reference proteome</keyword>
<keyword id="KW-0762">Sugar transport</keyword>
<keyword id="KW-0812">Transmembrane</keyword>
<keyword id="KW-1133">Transmembrane helix</keyword>
<keyword id="KW-0813">Transport</keyword>
<name>S35B1_XENTR</name>
<sequence length="323" mass="35582">MAAGGAQGSGGARLLVCFLGVFVCYFYYGILQETITRGTYGEGEKQEKFRFALSLVFVQCIVNALFAKLLIQFFDSGKTDRTQSWLYAACSLSYLGAMVSSNSALQFVNYPTQVLGKSCKPIPVMLLGVTLLRKKYPLSKYLCVLLIVLGVALFMYKPKNTGSGGDEHTFGYGELLLLLSLTLDGLTGVSQDHMRAHFQTGSNHMMLYINLWSSLFLGAGIVFTGELWDFLSFTERYPSIVYNIMLFSLTSALGQTFIFMTVVYFGPLTCSIITTTRKFFTILASVILFSNPISSIQWVGTILVFLGLGLDATYGKGSKKPSH</sequence>
<accession>Q8AXS6</accession>
<accession>Q28HJ6</accession>
<feature type="chain" id="PRO_0000213372" description="Solute carrier family 35 member B1">
    <location>
        <begin position="1"/>
        <end position="323"/>
    </location>
</feature>
<feature type="transmembrane region" description="Helical" evidence="2">
    <location>
        <begin position="15"/>
        <end position="35"/>
    </location>
</feature>
<feature type="transmembrane region" description="Helical" evidence="2">
    <location>
        <begin position="51"/>
        <end position="71"/>
    </location>
</feature>
<feature type="transmembrane region" description="Helical" evidence="2">
    <location>
        <begin position="85"/>
        <end position="105"/>
    </location>
</feature>
<feature type="transmembrane region" description="Helical" evidence="2">
    <location>
        <begin position="136"/>
        <end position="156"/>
    </location>
</feature>
<feature type="transmembrane region" description="Helical" evidence="2">
    <location>
        <begin position="169"/>
        <end position="189"/>
    </location>
</feature>
<feature type="transmembrane region" description="Helical" evidence="2">
    <location>
        <begin position="205"/>
        <end position="225"/>
    </location>
</feature>
<feature type="transmembrane region" description="Helical" evidence="2">
    <location>
        <begin position="253"/>
        <end position="273"/>
    </location>
</feature>
<feature type="transmembrane region" description="Helical" evidence="2">
    <location>
        <begin position="286"/>
        <end position="306"/>
    </location>
</feature>
<feature type="short sequence motif" description="Di-lysine motif">
    <location>
        <begin position="319"/>
        <end position="323"/>
    </location>
</feature>
<proteinExistence type="evidence at transcript level"/>
<gene>
    <name type="primary">slc35b1</name>
    <name type="ORF">TTpA002i04.1</name>
</gene>
<organism>
    <name type="scientific">Xenopus tropicalis</name>
    <name type="common">Western clawed frog</name>
    <name type="synonym">Silurana tropicalis</name>
    <dbReference type="NCBI Taxonomy" id="8364"/>
    <lineage>
        <taxon>Eukaryota</taxon>
        <taxon>Metazoa</taxon>
        <taxon>Chordata</taxon>
        <taxon>Craniata</taxon>
        <taxon>Vertebrata</taxon>
        <taxon>Euteleostomi</taxon>
        <taxon>Amphibia</taxon>
        <taxon>Batrachia</taxon>
        <taxon>Anura</taxon>
        <taxon>Pipoidea</taxon>
        <taxon>Pipidae</taxon>
        <taxon>Xenopodinae</taxon>
        <taxon>Xenopus</taxon>
        <taxon>Silurana</taxon>
    </lineage>
</organism>
<evidence type="ECO:0000250" key="1"/>
<evidence type="ECO:0000255" key="2"/>
<evidence type="ECO:0000305" key="3"/>
<comment type="function">
    <text evidence="1">Probable sugar transporter.</text>
</comment>
<comment type="subcellular location">
    <subcellularLocation>
        <location evidence="3">Endoplasmic reticulum membrane</location>
        <topology evidence="3">Multi-pass membrane protein</topology>
    </subcellularLocation>
</comment>
<comment type="domain">
    <text evidence="1">The di-lysine motif confers endoplasmic reticulum localization for type I membrane proteins.</text>
</comment>
<comment type="similarity">
    <text evidence="3">Belongs to the nucleotide-sugar transporter family. SLC35B subfamily.</text>
</comment>
<comment type="sequence caution" evidence="3">
    <conflict type="erroneous initiation">
        <sequence resource="EMBL-CDS" id="CAD54627"/>
    </conflict>
</comment>
<reference key="1">
    <citation type="journal article" date="2003" name="Biochimie">
        <title>The nucleotide-sugar transporter family: a phylogenetic approach.</title>
        <authorList>
            <person name="Martinez-Duncker I."/>
            <person name="Mollicone R."/>
            <person name="Codogno P."/>
            <person name="Oriol R."/>
        </authorList>
    </citation>
    <scope>NUCLEOTIDE SEQUENCE [MRNA]</scope>
    <scope>GENE FAMILY</scope>
</reference>
<reference key="2">
    <citation type="submission" date="2006-03" db="EMBL/GenBank/DDBJ databases">
        <authorList>
            <consortium name="Sanger Xenopus tropicalis EST/cDNA project"/>
        </authorList>
    </citation>
    <scope>NUCLEOTIDE SEQUENCE [LARGE SCALE MRNA]</scope>
    <source>
        <tissue>Tadpole</tissue>
    </source>
</reference>
<protein>
    <recommendedName>
        <fullName>Solute carrier family 35 member B1</fullName>
    </recommendedName>
</protein>
<dbReference type="EMBL" id="AJ512377">
    <property type="protein sequence ID" value="CAD54627.1"/>
    <property type="status" value="ALT_INIT"/>
    <property type="molecule type" value="mRNA"/>
</dbReference>
<dbReference type="EMBL" id="CR760858">
    <property type="protein sequence ID" value="CAJ82891.1"/>
    <property type="molecule type" value="mRNA"/>
</dbReference>
<dbReference type="RefSeq" id="NP_989418.1">
    <property type="nucleotide sequence ID" value="NM_204087.1"/>
</dbReference>
<dbReference type="SMR" id="Q8AXS6"/>
<dbReference type="FunCoup" id="Q8AXS6">
    <property type="interactions" value="1560"/>
</dbReference>
<dbReference type="STRING" id="8364.ENSXETP00000049605"/>
<dbReference type="PaxDb" id="8364-ENSXETP00000033116"/>
<dbReference type="GeneID" id="395058"/>
<dbReference type="KEGG" id="xtr:395058"/>
<dbReference type="AGR" id="Xenbase:XB-GENE-972777"/>
<dbReference type="CTD" id="10237"/>
<dbReference type="Xenbase" id="XB-GENE-972777">
    <property type="gene designation" value="slc35b1"/>
</dbReference>
<dbReference type="eggNOG" id="KOG1580">
    <property type="taxonomic scope" value="Eukaryota"/>
</dbReference>
<dbReference type="HOGENOM" id="CLU_036019_1_0_1"/>
<dbReference type="InParanoid" id="Q8AXS6"/>
<dbReference type="OrthoDB" id="78344at2759"/>
<dbReference type="Proteomes" id="UP000008143">
    <property type="component" value="Chromosome 10"/>
</dbReference>
<dbReference type="GO" id="GO:0005789">
    <property type="term" value="C:endoplasmic reticulum membrane"/>
    <property type="evidence" value="ECO:0007669"/>
    <property type="project" value="UniProtKB-SubCell"/>
</dbReference>
<dbReference type="GO" id="GO:0055085">
    <property type="term" value="P:transmembrane transport"/>
    <property type="evidence" value="ECO:0007669"/>
    <property type="project" value="InterPro"/>
</dbReference>
<dbReference type="InterPro" id="IPR013657">
    <property type="entry name" value="SCL35B1-4/HUT1"/>
</dbReference>
<dbReference type="PANTHER" id="PTHR10778">
    <property type="entry name" value="SOLUTE CARRIER FAMILY 35 MEMBER B"/>
    <property type="match status" value="1"/>
</dbReference>
<dbReference type="PANTHER" id="PTHR10778:SF10">
    <property type="entry name" value="SOLUTE CARRIER FAMILY 35 MEMBER B1"/>
    <property type="match status" value="1"/>
</dbReference>
<dbReference type="Pfam" id="PF08449">
    <property type="entry name" value="UAA"/>
    <property type="match status" value="1"/>
</dbReference>
<dbReference type="SUPFAM" id="SSF103481">
    <property type="entry name" value="Multidrug resistance efflux transporter EmrE"/>
    <property type="match status" value="2"/>
</dbReference>